<evidence type="ECO:0000255" key="1">
    <source>
        <dbReference type="HAMAP-Rule" id="MF_01432"/>
    </source>
</evidence>
<dbReference type="EC" id="3.2.-.-" evidence="1"/>
<dbReference type="EMBL" id="CP001127">
    <property type="protein sequence ID" value="ACF88750.1"/>
    <property type="molecule type" value="Genomic_DNA"/>
</dbReference>
<dbReference type="RefSeq" id="WP_000741408.1">
    <property type="nucleotide sequence ID" value="NC_011094.1"/>
</dbReference>
<dbReference type="SMR" id="B4TWP3"/>
<dbReference type="KEGG" id="sew:SeSA_A0057"/>
<dbReference type="HOGENOM" id="CLU_036838_2_2_6"/>
<dbReference type="Proteomes" id="UP000001865">
    <property type="component" value="Chromosome"/>
</dbReference>
<dbReference type="GO" id="GO:0005829">
    <property type="term" value="C:cytosol"/>
    <property type="evidence" value="ECO:0007669"/>
    <property type="project" value="TreeGrafter"/>
</dbReference>
<dbReference type="GO" id="GO:0008477">
    <property type="term" value="F:purine nucleosidase activity"/>
    <property type="evidence" value="ECO:0007669"/>
    <property type="project" value="TreeGrafter"/>
</dbReference>
<dbReference type="GO" id="GO:0006144">
    <property type="term" value="P:purine nucleobase metabolic process"/>
    <property type="evidence" value="ECO:0007669"/>
    <property type="project" value="UniProtKB-UniRule"/>
</dbReference>
<dbReference type="GO" id="GO:0006152">
    <property type="term" value="P:purine nucleoside catabolic process"/>
    <property type="evidence" value="ECO:0007669"/>
    <property type="project" value="TreeGrafter"/>
</dbReference>
<dbReference type="GO" id="GO:0006206">
    <property type="term" value="P:pyrimidine nucleobase metabolic process"/>
    <property type="evidence" value="ECO:0007669"/>
    <property type="project" value="UniProtKB-UniRule"/>
</dbReference>
<dbReference type="CDD" id="cd02651">
    <property type="entry name" value="nuc_hydro_IU_UC_XIUA"/>
    <property type="match status" value="1"/>
</dbReference>
<dbReference type="FunFam" id="3.90.245.10:FF:000002">
    <property type="entry name" value="Non-specific ribonucleoside hydrolase RihC"/>
    <property type="match status" value="1"/>
</dbReference>
<dbReference type="Gene3D" id="3.90.245.10">
    <property type="entry name" value="Ribonucleoside hydrolase-like"/>
    <property type="match status" value="1"/>
</dbReference>
<dbReference type="HAMAP" id="MF_01432">
    <property type="entry name" value="Nucleosid_hydro_RihC"/>
    <property type="match status" value="1"/>
</dbReference>
<dbReference type="InterPro" id="IPR001910">
    <property type="entry name" value="Inosine/uridine_hydrolase_dom"/>
</dbReference>
<dbReference type="InterPro" id="IPR023186">
    <property type="entry name" value="IUNH"/>
</dbReference>
<dbReference type="InterPro" id="IPR022976">
    <property type="entry name" value="Nucleosid_hydro_RihC_nonspecif"/>
</dbReference>
<dbReference type="InterPro" id="IPR036452">
    <property type="entry name" value="Ribo_hydro-like"/>
</dbReference>
<dbReference type="NCBIfam" id="NF008036">
    <property type="entry name" value="PRK10768.1"/>
    <property type="match status" value="1"/>
</dbReference>
<dbReference type="PANTHER" id="PTHR12304">
    <property type="entry name" value="INOSINE-URIDINE PREFERRING NUCLEOSIDE HYDROLASE"/>
    <property type="match status" value="1"/>
</dbReference>
<dbReference type="PANTHER" id="PTHR12304:SF15">
    <property type="entry name" value="NON-SPECIFIC RIBONUCLEOSIDE HYDROLASE RIHC"/>
    <property type="match status" value="1"/>
</dbReference>
<dbReference type="Pfam" id="PF01156">
    <property type="entry name" value="IU_nuc_hydro"/>
    <property type="match status" value="1"/>
</dbReference>
<dbReference type="SUPFAM" id="SSF53590">
    <property type="entry name" value="Nucleoside hydrolase"/>
    <property type="match status" value="1"/>
</dbReference>
<keyword id="KW-0326">Glycosidase</keyword>
<keyword id="KW-0378">Hydrolase</keyword>
<sequence length="306" mass="32914">MAASLHIILDTDPGIDDAAAIAAALFAPELDLQLMTTVAGNVSVEKTTRNGLQLLHFWDADVPLAQGAATPLLRPLRDAAYVHGESGMEGYDFVDHQRQPLAKPAFIAIRDVLMNAPEPMTLVAIGPLTNIALLLMHYPECRFNIHRLVIMGGSAGRGNFTPNAEFNIAVDPEAAAHVFRSGIEIVMCGLDVTNQAVLTPEYLATLPALNKTGGMLHALFSHYRSGSMQSGLRMHDLCAIAWLVRPELFTLQSCFVAVETQGQYTAGTTVVDIEGRLGQPANAQVALALDVDGFRQWVAEVFACAP</sequence>
<feature type="chain" id="PRO_1000145825" description="Non-specific ribonucleoside hydrolase RihC">
    <location>
        <begin position="1"/>
        <end position="306"/>
    </location>
</feature>
<feature type="active site" evidence="1">
    <location>
        <position position="235"/>
    </location>
</feature>
<organism>
    <name type="scientific">Salmonella schwarzengrund (strain CVM19633)</name>
    <dbReference type="NCBI Taxonomy" id="439843"/>
    <lineage>
        <taxon>Bacteria</taxon>
        <taxon>Pseudomonadati</taxon>
        <taxon>Pseudomonadota</taxon>
        <taxon>Gammaproteobacteria</taxon>
        <taxon>Enterobacterales</taxon>
        <taxon>Enterobacteriaceae</taxon>
        <taxon>Salmonella</taxon>
    </lineage>
</organism>
<name>RIHC_SALSV</name>
<accession>B4TWP3</accession>
<proteinExistence type="inferred from homology"/>
<comment type="function">
    <text evidence="1">Hydrolyzes both purine and pyrimidine ribonucleosides with a broad-substrate specificity.</text>
</comment>
<comment type="similarity">
    <text evidence="1">Belongs to the IUNH family. RihC subfamily.</text>
</comment>
<reference key="1">
    <citation type="journal article" date="2011" name="J. Bacteriol.">
        <title>Comparative genomics of 28 Salmonella enterica isolates: evidence for CRISPR-mediated adaptive sublineage evolution.</title>
        <authorList>
            <person name="Fricke W.F."/>
            <person name="Mammel M.K."/>
            <person name="McDermott P.F."/>
            <person name="Tartera C."/>
            <person name="White D.G."/>
            <person name="Leclerc J.E."/>
            <person name="Ravel J."/>
            <person name="Cebula T.A."/>
        </authorList>
    </citation>
    <scope>NUCLEOTIDE SEQUENCE [LARGE SCALE GENOMIC DNA]</scope>
    <source>
        <strain>CVM19633</strain>
    </source>
</reference>
<protein>
    <recommendedName>
        <fullName evidence="1">Non-specific ribonucleoside hydrolase RihC</fullName>
        <ecNumber evidence="1">3.2.-.-</ecNumber>
    </recommendedName>
    <alternativeName>
        <fullName evidence="1">Purine/pyrimidine ribonucleoside hydrolase</fullName>
    </alternativeName>
</protein>
<gene>
    <name evidence="1" type="primary">rihC</name>
    <name type="ordered locus">SeSA_A0057</name>
</gene>